<sequence>MQQNPHTHAAPGAARPVLRGVRRRLAAVTAAVAAVLVLGTLTGPGAQAADNPYERGPAPTESSIEALRGPYSVADTSVSSLAVTGFGGGTIYYPTSTSDGTFGAVVIAPGFTAYQSSIAWLGPRLASQGFVVFTIDTNTTLDQPDSRGRQLLAALDYLTGRSSVRGRIDSGRLGVMGHSMGGGGTLEAAKSRPSLQAAIPLTPWNLDKSWPEVSTPTLVVGADGDTIAPVASHAEPFYSGLPSSTDRAYLELNNATHFSPNTSNTTIAKYSISWLKRFIDDDTRYEQFLCPLPRPSLTIEEYRGNCPHGS</sequence>
<evidence type="ECO:0000250" key="1">
    <source>
        <dbReference type="UniProtKB" id="A0A0K8P6T7"/>
    </source>
</evidence>
<evidence type="ECO:0000255" key="2">
    <source>
        <dbReference type="PROSITE-ProRule" id="PRU00648"/>
    </source>
</evidence>
<evidence type="ECO:0000269" key="3">
    <source>
    </source>
</evidence>
<evidence type="ECO:0000303" key="4">
    <source>
    </source>
</evidence>
<evidence type="ECO:0000305" key="5"/>
<evidence type="ECO:0000305" key="6">
    <source>
    </source>
</evidence>
<evidence type="ECO:0000312" key="7">
    <source>
        <dbReference type="EMBL" id="CAB69685.1"/>
    </source>
</evidence>
<protein>
    <recommendedName>
        <fullName evidence="4">Bis(hydroxyethyl) terephthalate hydrolase</fullName>
        <shortName evidence="4">BHET hydrolase</shortName>
        <shortName evidence="4">BHETase</shortName>
        <ecNumber evidence="3">3.1.1.-</ecNumber>
    </recommendedName>
    <alternativeName>
        <fullName evidence="4">BHET-degrading enzyme</fullName>
    </alternativeName>
    <alternativeName>
        <fullName evidence="4">BHET-degrading esterase A</fullName>
    </alternativeName>
</protein>
<name>BHETH_STRCO</name>
<proteinExistence type="evidence at protein level"/>
<gene>
    <name evidence="4" type="primary">bdeA</name>
    <name evidence="4 7" type="synonym">lipA</name>
    <name evidence="7" type="ordered locus">SCO0713</name>
    <name evidence="7" type="ORF">SCF42.23c</name>
</gene>
<comment type="function">
    <text evidence="3">Catalyzes the degradation of bis(hydroxyethyl) terephthalate (BHET), a derived-oligomer of the plastic poly(ethylene terephthalate) (PET), hydrolyzing BHET to mono(2-hydroxyethyl) terephthalate (MHET). Shows no activity against PET.</text>
</comment>
<comment type="catalytic activity">
    <reaction evidence="3">
        <text>bis(2-hydroxyethyl) terephthalate + H2O = 4-[(2-hydroxyethoxy)carbonyl]benzoate + ethylene glycol + H(+)</text>
        <dbReference type="Rhea" id="RHEA:80759"/>
        <dbReference type="ChEBI" id="CHEBI:15377"/>
        <dbReference type="ChEBI" id="CHEBI:15378"/>
        <dbReference type="ChEBI" id="CHEBI:30742"/>
        <dbReference type="ChEBI" id="CHEBI:131704"/>
        <dbReference type="ChEBI" id="CHEBI:231672"/>
    </reaction>
    <physiologicalReaction direction="left-to-right" evidence="3">
        <dbReference type="Rhea" id="RHEA:80760"/>
    </physiologicalReaction>
</comment>
<comment type="biophysicochemical properties">
    <phDependence>
        <text evidence="3">Optimum pH is 7.0.</text>
    </phDependence>
    <temperatureDependence>
        <text evidence="3">Optimum temperature is 25 degrees Celsius.</text>
    </temperatureDependence>
</comment>
<comment type="subcellular location">
    <subcellularLocation>
        <location evidence="6">Secreted</location>
    </subcellularLocation>
</comment>
<comment type="PTM">
    <text evidence="2">Predicted to be exported by the Tat system. The position of the signal peptide cleavage has not been experimentally proven.</text>
</comment>
<comment type="disruption phenotype">
    <text evidence="3">Deletion of this gene results in reduced BHET degradation.</text>
</comment>
<comment type="similarity">
    <text evidence="5">Belongs to the AB hydrolase superfamily.</text>
</comment>
<dbReference type="EC" id="3.1.1.-" evidence="3"/>
<dbReference type="EMBL" id="AL939106">
    <property type="protein sequence ID" value="CAB69685.1"/>
    <property type="molecule type" value="Genomic_DNA"/>
</dbReference>
<dbReference type="RefSeq" id="NP_625018.1">
    <property type="nucleotide sequence ID" value="NC_003888.3"/>
</dbReference>
<dbReference type="RefSeq" id="WP_003978149.1">
    <property type="nucleotide sequence ID" value="NZ_VNID01000004.1"/>
</dbReference>
<dbReference type="SMR" id="Q9L2J6"/>
<dbReference type="STRING" id="100226.gene:17758296"/>
<dbReference type="ESTHER" id="strco-LIPA">
    <property type="family name" value="Polyesterase-lipase-cutinase"/>
</dbReference>
<dbReference type="PaxDb" id="100226-SCO0713"/>
<dbReference type="KEGG" id="sco:SCO0713"/>
<dbReference type="PATRIC" id="fig|100226.15.peg.701"/>
<dbReference type="eggNOG" id="COG1073">
    <property type="taxonomic scope" value="Bacteria"/>
</dbReference>
<dbReference type="HOGENOM" id="CLU_052605_1_0_11"/>
<dbReference type="InParanoid" id="Q9L2J6"/>
<dbReference type="OrthoDB" id="1466228at2"/>
<dbReference type="Proteomes" id="UP000001973">
    <property type="component" value="Chromosome"/>
</dbReference>
<dbReference type="GO" id="GO:0005576">
    <property type="term" value="C:extracellular region"/>
    <property type="evidence" value="ECO:0007669"/>
    <property type="project" value="UniProtKB-SubCell"/>
</dbReference>
<dbReference type="GO" id="GO:0052689">
    <property type="term" value="F:carboxylic ester hydrolase activity"/>
    <property type="evidence" value="ECO:0007669"/>
    <property type="project" value="UniProtKB-ARBA"/>
</dbReference>
<dbReference type="GO" id="GO:0016787">
    <property type="term" value="F:hydrolase activity"/>
    <property type="evidence" value="ECO:0000318"/>
    <property type="project" value="GO_Central"/>
</dbReference>
<dbReference type="FunFam" id="3.40.50.1820:FF:000256">
    <property type="entry name" value="Poly(ethylene terephthalate) hydrolase"/>
    <property type="match status" value="1"/>
</dbReference>
<dbReference type="Gene3D" id="3.40.50.1820">
    <property type="entry name" value="alpha/beta hydrolase"/>
    <property type="match status" value="1"/>
</dbReference>
<dbReference type="InterPro" id="IPR029058">
    <property type="entry name" value="AB_hydrolase_fold"/>
</dbReference>
<dbReference type="InterPro" id="IPR050261">
    <property type="entry name" value="FrsA_esterase"/>
</dbReference>
<dbReference type="InterPro" id="IPR041127">
    <property type="entry name" value="PET_hydrolase/cutinase-like"/>
</dbReference>
<dbReference type="InterPro" id="IPR006311">
    <property type="entry name" value="TAT_signal"/>
</dbReference>
<dbReference type="PANTHER" id="PTHR22946">
    <property type="entry name" value="DIENELACTONE HYDROLASE DOMAIN-CONTAINING PROTEIN-RELATED"/>
    <property type="match status" value="1"/>
</dbReference>
<dbReference type="PANTHER" id="PTHR22946:SF9">
    <property type="entry name" value="POLYKETIDE TRANSFERASE AF380"/>
    <property type="match status" value="1"/>
</dbReference>
<dbReference type="Pfam" id="PF12740">
    <property type="entry name" value="PETase"/>
    <property type="match status" value="1"/>
</dbReference>
<dbReference type="SUPFAM" id="SSF53474">
    <property type="entry name" value="alpha/beta-Hydrolases"/>
    <property type="match status" value="1"/>
</dbReference>
<dbReference type="PROSITE" id="PS51318">
    <property type="entry name" value="TAT"/>
    <property type="match status" value="1"/>
</dbReference>
<organism>
    <name type="scientific">Streptomyces coelicolor (strain ATCC BAA-471 / A3(2) / M145)</name>
    <dbReference type="NCBI Taxonomy" id="100226"/>
    <lineage>
        <taxon>Bacteria</taxon>
        <taxon>Bacillati</taxon>
        <taxon>Actinomycetota</taxon>
        <taxon>Actinomycetes</taxon>
        <taxon>Kitasatosporales</taxon>
        <taxon>Streptomycetaceae</taxon>
        <taxon>Streptomyces</taxon>
        <taxon>Streptomyces albidoflavus group</taxon>
    </lineage>
</organism>
<reference key="1">
    <citation type="journal article" date="2002" name="Nature">
        <title>Complete genome sequence of the model actinomycete Streptomyces coelicolor A3(2).</title>
        <authorList>
            <person name="Bentley S.D."/>
            <person name="Chater K.F."/>
            <person name="Cerdeno-Tarraga A.-M."/>
            <person name="Challis G.L."/>
            <person name="Thomson N.R."/>
            <person name="James K.D."/>
            <person name="Harris D.E."/>
            <person name="Quail M.A."/>
            <person name="Kieser H."/>
            <person name="Harper D."/>
            <person name="Bateman A."/>
            <person name="Brown S."/>
            <person name="Chandra G."/>
            <person name="Chen C.W."/>
            <person name="Collins M."/>
            <person name="Cronin A."/>
            <person name="Fraser A."/>
            <person name="Goble A."/>
            <person name="Hidalgo J."/>
            <person name="Hornsby T."/>
            <person name="Howarth S."/>
            <person name="Huang C.-H."/>
            <person name="Kieser T."/>
            <person name="Larke L."/>
            <person name="Murphy L.D."/>
            <person name="Oliver K."/>
            <person name="O'Neil S."/>
            <person name="Rabbinowitsch E."/>
            <person name="Rajandream M.A."/>
            <person name="Rutherford K.M."/>
            <person name="Rutter S."/>
            <person name="Seeger K."/>
            <person name="Saunders D."/>
            <person name="Sharp S."/>
            <person name="Squares R."/>
            <person name="Squares S."/>
            <person name="Taylor K."/>
            <person name="Warren T."/>
            <person name="Wietzorrek A."/>
            <person name="Woodward J.R."/>
            <person name="Barrell B.G."/>
            <person name="Parkhill J."/>
            <person name="Hopwood D.A."/>
        </authorList>
    </citation>
    <scope>NUCLEOTIDE SEQUENCE [LARGE SCALE GENOMIC DNA]</scope>
    <source>
        <strain>ATCC BAA-471 / A3(2) / M145</strain>
    </source>
</reference>
<reference key="2">
    <citation type="journal article" date="2024" name="Commun. Biol.">
        <title>Polyester degradation by soil bacteria: identification of conserved BHETase enzymes in Streptomyces.</title>
        <authorList>
            <person name="Verschoor J.A."/>
            <person name="Croese M.R.J."/>
            <person name="Lakemeier S.E."/>
            <person name="Mugge A."/>
            <person name="Burgers C.M.C."/>
            <person name="Innocenti P."/>
            <person name="Willemse J."/>
            <person name="Crooijmans M.E."/>
            <person name="van Wezel G.P."/>
            <person name="Ram A.F.J."/>
            <person name="de Winde J.H."/>
        </authorList>
    </citation>
    <scope>FUNCTION</scope>
    <scope>CATALYTIC ACTIVITY</scope>
    <scope>BIOPHYSICOCHEMICAL PROPERTIES</scope>
    <scope>DISRUPTION PHENOTYPE</scope>
    <source>
        <strain>ATCC BAA-471 / A3(2) / M145</strain>
    </source>
</reference>
<keyword id="KW-1015">Disulfide bond</keyword>
<keyword id="KW-0378">Hydrolase</keyword>
<keyword id="KW-1185">Reference proteome</keyword>
<keyword id="KW-0964">Secreted</keyword>
<keyword id="KW-0732">Signal</keyword>
<feature type="signal peptide" description="Tat-type signal" evidence="2">
    <location>
        <begin position="1"/>
        <end position="48"/>
    </location>
</feature>
<feature type="chain" id="PRO_0000461232" description="Bis(hydroxyethyl) terephthalate hydrolase">
    <location>
        <begin position="49"/>
        <end position="310"/>
    </location>
</feature>
<feature type="active site" description="Nucleophile" evidence="1">
    <location>
        <position position="179"/>
    </location>
</feature>
<feature type="active site" description="Charge relay system" evidence="1">
    <location>
        <position position="225"/>
    </location>
</feature>
<feature type="active site" description="Charge relay system" evidence="1">
    <location>
        <position position="257"/>
    </location>
</feature>
<feature type="binding site" evidence="1">
    <location>
        <position position="111"/>
    </location>
    <ligand>
        <name>bis(2-hydroxyethyl) terephthalate</name>
        <dbReference type="ChEBI" id="CHEBI:231672"/>
    </ligand>
</feature>
<feature type="binding site" evidence="1">
    <location>
        <position position="180"/>
    </location>
    <ligand>
        <name>bis(2-hydroxyethyl) terephthalate</name>
        <dbReference type="ChEBI" id="CHEBI:231672"/>
    </ligand>
</feature>
<feature type="binding site" evidence="1">
    <location>
        <position position="204"/>
    </location>
    <ligand>
        <name>bis(2-hydroxyethyl) terephthalate</name>
        <dbReference type="ChEBI" id="CHEBI:231672"/>
    </ligand>
</feature>
<feature type="disulfide bond" evidence="1">
    <location>
        <begin position="290"/>
        <end position="306"/>
    </location>
</feature>
<accession>Q9L2J6</accession>